<feature type="chain" id="PRO_1000079541" description="Large ribosomal subunit protein uL10">
    <location>
        <begin position="1"/>
        <end position="172"/>
    </location>
</feature>
<comment type="function">
    <text evidence="1">Forms part of the ribosomal stalk, playing a central role in the interaction of the ribosome with GTP-bound translation factors.</text>
</comment>
<comment type="subunit">
    <text evidence="1">Part of the ribosomal stalk of the 50S ribosomal subunit. The N-terminus interacts with L11 and the large rRNA to form the base of the stalk. The C-terminus forms an elongated spine to which L12 dimers bind in a sequential fashion forming a multimeric L10(L12)X complex.</text>
</comment>
<comment type="similarity">
    <text evidence="1">Belongs to the universal ribosomal protein uL10 family.</text>
</comment>
<accession>A8LLK4</accession>
<protein>
    <recommendedName>
        <fullName evidence="1">Large ribosomal subunit protein uL10</fullName>
    </recommendedName>
    <alternativeName>
        <fullName evidence="2">50S ribosomal protein L10</fullName>
    </alternativeName>
</protein>
<sequence length="172" mass="17924">MDRAQKEKLVDELGQIFESSGVVVVAHYAGLTVAEMQDFRARMREAGGSVRVAKNRLAKIALQGKPNEKIGELLTGMTVLAYSEDPVAAAKVADAYAKDNSKYQILGGAMGEDYLDQAGVKAVASMPSREELIAQIASCIGAPASNIAGAIGAPASNIASILSTIEEKAEAA</sequence>
<name>RL10_DINSH</name>
<proteinExistence type="inferred from homology"/>
<dbReference type="EMBL" id="CP000830">
    <property type="protein sequence ID" value="ABV92014.1"/>
    <property type="molecule type" value="Genomic_DNA"/>
</dbReference>
<dbReference type="RefSeq" id="WP_012176947.1">
    <property type="nucleotide sequence ID" value="NC_009952.1"/>
</dbReference>
<dbReference type="SMR" id="A8LLK4"/>
<dbReference type="STRING" id="398580.Dshi_0265"/>
<dbReference type="KEGG" id="dsh:Dshi_0265"/>
<dbReference type="eggNOG" id="COG0244">
    <property type="taxonomic scope" value="Bacteria"/>
</dbReference>
<dbReference type="HOGENOM" id="CLU_092227_0_0_5"/>
<dbReference type="OrthoDB" id="9791972at2"/>
<dbReference type="Proteomes" id="UP000006833">
    <property type="component" value="Chromosome"/>
</dbReference>
<dbReference type="GO" id="GO:0015934">
    <property type="term" value="C:large ribosomal subunit"/>
    <property type="evidence" value="ECO:0007669"/>
    <property type="project" value="InterPro"/>
</dbReference>
<dbReference type="GO" id="GO:0070180">
    <property type="term" value="F:large ribosomal subunit rRNA binding"/>
    <property type="evidence" value="ECO:0007669"/>
    <property type="project" value="UniProtKB-UniRule"/>
</dbReference>
<dbReference type="GO" id="GO:0003735">
    <property type="term" value="F:structural constituent of ribosome"/>
    <property type="evidence" value="ECO:0007669"/>
    <property type="project" value="InterPro"/>
</dbReference>
<dbReference type="GO" id="GO:0006412">
    <property type="term" value="P:translation"/>
    <property type="evidence" value="ECO:0007669"/>
    <property type="project" value="UniProtKB-UniRule"/>
</dbReference>
<dbReference type="CDD" id="cd05797">
    <property type="entry name" value="Ribosomal_L10"/>
    <property type="match status" value="1"/>
</dbReference>
<dbReference type="Gene3D" id="3.30.70.1730">
    <property type="match status" value="1"/>
</dbReference>
<dbReference type="Gene3D" id="6.10.250.290">
    <property type="match status" value="1"/>
</dbReference>
<dbReference type="HAMAP" id="MF_00362">
    <property type="entry name" value="Ribosomal_uL10"/>
    <property type="match status" value="1"/>
</dbReference>
<dbReference type="InterPro" id="IPR001790">
    <property type="entry name" value="Ribosomal_uL10"/>
</dbReference>
<dbReference type="InterPro" id="IPR043141">
    <property type="entry name" value="Ribosomal_uL10-like_sf"/>
</dbReference>
<dbReference type="InterPro" id="IPR022973">
    <property type="entry name" value="Ribosomal_uL10_bac"/>
</dbReference>
<dbReference type="InterPro" id="IPR047865">
    <property type="entry name" value="Ribosomal_uL10_bac_type"/>
</dbReference>
<dbReference type="InterPro" id="IPR002363">
    <property type="entry name" value="Ribosomal_uL10_CS_bac"/>
</dbReference>
<dbReference type="NCBIfam" id="NF000955">
    <property type="entry name" value="PRK00099.1-1"/>
    <property type="match status" value="1"/>
</dbReference>
<dbReference type="PANTHER" id="PTHR11560">
    <property type="entry name" value="39S RIBOSOMAL PROTEIN L10, MITOCHONDRIAL"/>
    <property type="match status" value="1"/>
</dbReference>
<dbReference type="Pfam" id="PF00466">
    <property type="entry name" value="Ribosomal_L10"/>
    <property type="match status" value="1"/>
</dbReference>
<dbReference type="SUPFAM" id="SSF160369">
    <property type="entry name" value="Ribosomal protein L10-like"/>
    <property type="match status" value="1"/>
</dbReference>
<dbReference type="PROSITE" id="PS01109">
    <property type="entry name" value="RIBOSOMAL_L10"/>
    <property type="match status" value="1"/>
</dbReference>
<reference key="1">
    <citation type="journal article" date="2010" name="ISME J.">
        <title>The complete genome sequence of the algal symbiont Dinoroseobacter shibae: a hitchhiker's guide to life in the sea.</title>
        <authorList>
            <person name="Wagner-Dobler I."/>
            <person name="Ballhausen B."/>
            <person name="Berger M."/>
            <person name="Brinkhoff T."/>
            <person name="Buchholz I."/>
            <person name="Bunk B."/>
            <person name="Cypionka H."/>
            <person name="Daniel R."/>
            <person name="Drepper T."/>
            <person name="Gerdts G."/>
            <person name="Hahnke S."/>
            <person name="Han C."/>
            <person name="Jahn D."/>
            <person name="Kalhoefer D."/>
            <person name="Kiss H."/>
            <person name="Klenk H.P."/>
            <person name="Kyrpides N."/>
            <person name="Liebl W."/>
            <person name="Liesegang H."/>
            <person name="Meincke L."/>
            <person name="Pati A."/>
            <person name="Petersen J."/>
            <person name="Piekarski T."/>
            <person name="Pommerenke C."/>
            <person name="Pradella S."/>
            <person name="Pukall R."/>
            <person name="Rabus R."/>
            <person name="Stackebrandt E."/>
            <person name="Thole S."/>
            <person name="Thompson L."/>
            <person name="Tielen P."/>
            <person name="Tomasch J."/>
            <person name="von Jan M."/>
            <person name="Wanphrut N."/>
            <person name="Wichels A."/>
            <person name="Zech H."/>
            <person name="Simon M."/>
        </authorList>
    </citation>
    <scope>NUCLEOTIDE SEQUENCE [LARGE SCALE GENOMIC DNA]</scope>
    <source>
        <strain>DSM 16493 / NCIMB 14021 / DFL 12</strain>
    </source>
</reference>
<organism>
    <name type="scientific">Dinoroseobacter shibae (strain DSM 16493 / NCIMB 14021 / DFL 12)</name>
    <dbReference type="NCBI Taxonomy" id="398580"/>
    <lineage>
        <taxon>Bacteria</taxon>
        <taxon>Pseudomonadati</taxon>
        <taxon>Pseudomonadota</taxon>
        <taxon>Alphaproteobacteria</taxon>
        <taxon>Rhodobacterales</taxon>
        <taxon>Roseobacteraceae</taxon>
        <taxon>Dinoroseobacter</taxon>
    </lineage>
</organism>
<keyword id="KW-1185">Reference proteome</keyword>
<keyword id="KW-0687">Ribonucleoprotein</keyword>
<keyword id="KW-0689">Ribosomal protein</keyword>
<keyword id="KW-0694">RNA-binding</keyword>
<keyword id="KW-0699">rRNA-binding</keyword>
<gene>
    <name evidence="1" type="primary">rplJ</name>
    <name type="ordered locus">Dshi_0265</name>
</gene>
<evidence type="ECO:0000255" key="1">
    <source>
        <dbReference type="HAMAP-Rule" id="MF_00362"/>
    </source>
</evidence>
<evidence type="ECO:0000305" key="2"/>